<sequence length="161" mass="18104">MTRLLVVYFLISALLVGLDQWSKYLTVQNISLGETKEFIPGFLSLTHLRNTGAAWSLLEGKMIFFYVITVIVSVVIIYLLIKNYKKSIWYSVGLSFVLAGAIGNFIDRVRLGYVVDMLQTDFMNFPIFNVADSTLVVGVICIFIYLILDEKAAKEGKNGTN</sequence>
<organism>
    <name type="scientific">Enterococcus faecalis (strain ATCC 700802 / V583)</name>
    <dbReference type="NCBI Taxonomy" id="226185"/>
    <lineage>
        <taxon>Bacteria</taxon>
        <taxon>Bacillati</taxon>
        <taxon>Bacillota</taxon>
        <taxon>Bacilli</taxon>
        <taxon>Lactobacillales</taxon>
        <taxon>Enterococcaceae</taxon>
        <taxon>Enterococcus</taxon>
    </lineage>
</organism>
<evidence type="ECO:0000255" key="1">
    <source>
        <dbReference type="HAMAP-Rule" id="MF_00161"/>
    </source>
</evidence>
<dbReference type="EC" id="3.4.23.36" evidence="1"/>
<dbReference type="EMBL" id="AE016830">
    <property type="protein sequence ID" value="AAO81498.1"/>
    <property type="molecule type" value="Genomic_DNA"/>
</dbReference>
<dbReference type="RefSeq" id="NP_815428.1">
    <property type="nucleotide sequence ID" value="NC_004668.1"/>
</dbReference>
<dbReference type="SMR" id="Q834D8"/>
<dbReference type="STRING" id="226185.EF_1723"/>
<dbReference type="EnsemblBacteria" id="AAO81498">
    <property type="protein sequence ID" value="AAO81498"/>
    <property type="gene ID" value="EF_1723"/>
</dbReference>
<dbReference type="KEGG" id="efa:EF1723"/>
<dbReference type="PATRIC" id="fig|226185.45.peg.1789"/>
<dbReference type="eggNOG" id="COG0597">
    <property type="taxonomic scope" value="Bacteria"/>
</dbReference>
<dbReference type="HOGENOM" id="CLU_083252_3_3_9"/>
<dbReference type="UniPathway" id="UPA00665"/>
<dbReference type="Proteomes" id="UP000001415">
    <property type="component" value="Chromosome"/>
</dbReference>
<dbReference type="GO" id="GO:0005886">
    <property type="term" value="C:plasma membrane"/>
    <property type="evidence" value="ECO:0007669"/>
    <property type="project" value="UniProtKB-SubCell"/>
</dbReference>
<dbReference type="GO" id="GO:0004190">
    <property type="term" value="F:aspartic-type endopeptidase activity"/>
    <property type="evidence" value="ECO:0007669"/>
    <property type="project" value="UniProtKB-UniRule"/>
</dbReference>
<dbReference type="GO" id="GO:0006508">
    <property type="term" value="P:proteolysis"/>
    <property type="evidence" value="ECO:0007669"/>
    <property type="project" value="UniProtKB-KW"/>
</dbReference>
<dbReference type="HAMAP" id="MF_00161">
    <property type="entry name" value="LspA"/>
    <property type="match status" value="1"/>
</dbReference>
<dbReference type="InterPro" id="IPR001872">
    <property type="entry name" value="Peptidase_A8"/>
</dbReference>
<dbReference type="NCBIfam" id="TIGR00077">
    <property type="entry name" value="lspA"/>
    <property type="match status" value="1"/>
</dbReference>
<dbReference type="PANTHER" id="PTHR33695">
    <property type="entry name" value="LIPOPROTEIN SIGNAL PEPTIDASE"/>
    <property type="match status" value="1"/>
</dbReference>
<dbReference type="PANTHER" id="PTHR33695:SF1">
    <property type="entry name" value="LIPOPROTEIN SIGNAL PEPTIDASE"/>
    <property type="match status" value="1"/>
</dbReference>
<dbReference type="Pfam" id="PF01252">
    <property type="entry name" value="Peptidase_A8"/>
    <property type="match status" value="1"/>
</dbReference>
<dbReference type="PRINTS" id="PR00781">
    <property type="entry name" value="LIPOSIGPTASE"/>
</dbReference>
<dbReference type="PROSITE" id="PS00855">
    <property type="entry name" value="SPASE_II"/>
    <property type="match status" value="1"/>
</dbReference>
<feature type="chain" id="PRO_0000289375" description="Lipoprotein signal peptidase">
    <location>
        <begin position="1"/>
        <end position="161"/>
    </location>
</feature>
<feature type="transmembrane region" description="Helical" evidence="1">
    <location>
        <begin position="4"/>
        <end position="24"/>
    </location>
</feature>
<feature type="transmembrane region" description="Helical" evidence="1">
    <location>
        <begin position="61"/>
        <end position="81"/>
    </location>
</feature>
<feature type="transmembrane region" description="Helical" evidence="1">
    <location>
        <begin position="87"/>
        <end position="107"/>
    </location>
</feature>
<feature type="transmembrane region" description="Helical" evidence="1">
    <location>
        <begin position="127"/>
        <end position="147"/>
    </location>
</feature>
<feature type="active site" evidence="1">
    <location>
        <position position="116"/>
    </location>
</feature>
<feature type="active site" evidence="1">
    <location>
        <position position="132"/>
    </location>
</feature>
<comment type="function">
    <text evidence="1">This protein specifically catalyzes the removal of signal peptides from prolipoproteins.</text>
</comment>
<comment type="catalytic activity">
    <reaction evidence="1">
        <text>Release of signal peptides from bacterial membrane prolipoproteins. Hydrolyzes -Xaa-Yaa-Zaa-|-(S,diacylglyceryl)Cys-, in which Xaa is hydrophobic (preferably Leu), and Yaa (Ala or Ser) and Zaa (Gly or Ala) have small, neutral side chains.</text>
        <dbReference type="EC" id="3.4.23.36"/>
    </reaction>
</comment>
<comment type="pathway">
    <text evidence="1">Protein modification; lipoprotein biosynthesis (signal peptide cleavage).</text>
</comment>
<comment type="subcellular location">
    <subcellularLocation>
        <location evidence="1">Cell membrane</location>
        <topology evidence="1">Multi-pass membrane protein</topology>
    </subcellularLocation>
</comment>
<comment type="similarity">
    <text evidence="1">Belongs to the peptidase A8 family.</text>
</comment>
<accession>Q834D8</accession>
<gene>
    <name evidence="1" type="primary">lspA</name>
    <name type="ordered locus">EF_1723</name>
</gene>
<name>LSPA_ENTFA</name>
<keyword id="KW-0064">Aspartyl protease</keyword>
<keyword id="KW-1003">Cell membrane</keyword>
<keyword id="KW-0378">Hydrolase</keyword>
<keyword id="KW-0472">Membrane</keyword>
<keyword id="KW-0645">Protease</keyword>
<keyword id="KW-1185">Reference proteome</keyword>
<keyword id="KW-0812">Transmembrane</keyword>
<keyword id="KW-1133">Transmembrane helix</keyword>
<reference key="1">
    <citation type="journal article" date="2003" name="Science">
        <title>Role of mobile DNA in the evolution of vancomycin-resistant Enterococcus faecalis.</title>
        <authorList>
            <person name="Paulsen I.T."/>
            <person name="Banerjei L."/>
            <person name="Myers G.S.A."/>
            <person name="Nelson K.E."/>
            <person name="Seshadri R."/>
            <person name="Read T.D."/>
            <person name="Fouts D.E."/>
            <person name="Eisen J.A."/>
            <person name="Gill S.R."/>
            <person name="Heidelberg J.F."/>
            <person name="Tettelin H."/>
            <person name="Dodson R.J."/>
            <person name="Umayam L.A."/>
            <person name="Brinkac L.M."/>
            <person name="Beanan M.J."/>
            <person name="Daugherty S.C."/>
            <person name="DeBoy R.T."/>
            <person name="Durkin S.A."/>
            <person name="Kolonay J.F."/>
            <person name="Madupu R."/>
            <person name="Nelson W.C."/>
            <person name="Vamathevan J.J."/>
            <person name="Tran B."/>
            <person name="Upton J."/>
            <person name="Hansen T."/>
            <person name="Shetty J."/>
            <person name="Khouri H.M."/>
            <person name="Utterback T.R."/>
            <person name="Radune D."/>
            <person name="Ketchum K.A."/>
            <person name="Dougherty B.A."/>
            <person name="Fraser C.M."/>
        </authorList>
    </citation>
    <scope>NUCLEOTIDE SEQUENCE [LARGE SCALE GENOMIC DNA]</scope>
    <source>
        <strain>ATCC 700802 / V583</strain>
    </source>
</reference>
<proteinExistence type="inferred from homology"/>
<protein>
    <recommendedName>
        <fullName evidence="1">Lipoprotein signal peptidase</fullName>
        <ecNumber evidence="1">3.4.23.36</ecNumber>
    </recommendedName>
    <alternativeName>
        <fullName evidence="1">Prolipoprotein signal peptidase</fullName>
    </alternativeName>
    <alternativeName>
        <fullName evidence="1">Signal peptidase II</fullName>
        <shortName evidence="1">SPase II</shortName>
    </alternativeName>
</protein>